<protein>
    <recommendedName>
        <fullName>ABC transporter B family member 22</fullName>
        <shortName>ABC transporter ABCB.22</shortName>
        <shortName>AtABCB22</shortName>
    </recommendedName>
    <alternativeName>
        <fullName>P-glycoprotein 22</fullName>
    </alternativeName>
    <alternativeName>
        <fullName>Putative multidrug resistance protein 21</fullName>
    </alternativeName>
</protein>
<reference key="1">
    <citation type="journal article" date="2000" name="DNA Res.">
        <title>Structural analysis of Arabidopsis thaliana chromosome 3. I. Sequence features of the regions of 4,504,864 bp covered by sixty P1 and TAC clones.</title>
        <authorList>
            <person name="Sato S."/>
            <person name="Nakamura Y."/>
            <person name="Kaneko T."/>
            <person name="Katoh T."/>
            <person name="Asamizu E."/>
            <person name="Tabata S."/>
        </authorList>
    </citation>
    <scope>NUCLEOTIDE SEQUENCE [LARGE SCALE GENOMIC DNA]</scope>
    <source>
        <strain>cv. Columbia</strain>
    </source>
</reference>
<reference key="2">
    <citation type="journal article" date="2017" name="Plant J.">
        <title>Araport11: a complete reannotation of the Arabidopsis thaliana reference genome.</title>
        <authorList>
            <person name="Cheng C.Y."/>
            <person name="Krishnakumar V."/>
            <person name="Chan A.P."/>
            <person name="Thibaud-Nissen F."/>
            <person name="Schobel S."/>
            <person name="Town C.D."/>
        </authorList>
    </citation>
    <scope>GENOME REANNOTATION</scope>
    <source>
        <strain>cv. Columbia</strain>
    </source>
</reference>
<reference key="3">
    <citation type="journal article" date="2001" name="J. Biol. Chem.">
        <title>The Arabidopsis thaliana ABC protein superfamily, a complete inventory.</title>
        <authorList>
            <person name="Sanchez-Fernandez R."/>
            <person name="Davies T.G."/>
            <person name="Coleman J.O."/>
            <person name="Rea P.A."/>
        </authorList>
    </citation>
    <scope>GENE FAMILY</scope>
    <scope>NOMENCLATURE</scope>
</reference>
<reference key="4">
    <citation type="journal article" date="2008" name="Trends Plant Sci.">
        <title>Plant ABC proteins - a unified nomenclature and updated inventory.</title>
        <authorList>
            <person name="Verrier P.J."/>
            <person name="Bird D."/>
            <person name="Burla B."/>
            <person name="Dassa E."/>
            <person name="Forestier C."/>
            <person name="Geisler M."/>
            <person name="Klein M."/>
            <person name="Kolukisaoglu H.U."/>
            <person name="Lee Y."/>
            <person name="Martinoia E."/>
            <person name="Murphy A."/>
            <person name="Rea P.A."/>
            <person name="Samuels L."/>
            <person name="Schulz B."/>
            <person name="Spalding E.J."/>
            <person name="Yazaki K."/>
            <person name="Theodoulou F.L."/>
        </authorList>
    </citation>
    <scope>GENE FAMILY</scope>
    <scope>NOMENCLATURE</scope>
</reference>
<gene>
    <name type="primary">ABCB22</name>
    <name type="synonym">MDR21</name>
    <name type="synonym">PGP22</name>
    <name type="ordered locus">At3g28415</name>
    <name type="ORF">MFJ20.11</name>
</gene>
<comment type="subcellular location">
    <subcellularLocation>
        <location evidence="3">Membrane</location>
        <topology evidence="3">Multi-pass membrane protein</topology>
    </subcellularLocation>
</comment>
<comment type="similarity">
    <text evidence="4">Belongs to the ABC transporter superfamily. ABCB family. Multidrug resistance exporter (TC 3.A.1.201) subfamily.</text>
</comment>
<comment type="sequence caution" evidence="4">
    <conflict type="erroneous gene model prediction">
        <sequence resource="EMBL-CDS" id="AEE77442"/>
    </conflict>
</comment>
<comment type="sequence caution" evidence="4">
    <conflict type="erroneous initiation">
        <sequence resource="EMBL-CDS" id="BAB02858"/>
    </conflict>
    <text>Extended N-terminus.</text>
</comment>
<organism>
    <name type="scientific">Arabidopsis thaliana</name>
    <name type="common">Mouse-ear cress</name>
    <dbReference type="NCBI Taxonomy" id="3702"/>
    <lineage>
        <taxon>Eukaryota</taxon>
        <taxon>Viridiplantae</taxon>
        <taxon>Streptophyta</taxon>
        <taxon>Embryophyta</taxon>
        <taxon>Tracheophyta</taxon>
        <taxon>Spermatophyta</taxon>
        <taxon>Magnoliopsida</taxon>
        <taxon>eudicotyledons</taxon>
        <taxon>Gunneridae</taxon>
        <taxon>Pentapetalae</taxon>
        <taxon>rosids</taxon>
        <taxon>malvids</taxon>
        <taxon>Brassicales</taxon>
        <taxon>Brassicaceae</taxon>
        <taxon>Camelineae</taxon>
        <taxon>Arabidopsis</taxon>
    </lineage>
</organism>
<feature type="chain" id="PRO_0000227932" description="ABC transporter B family member 22">
    <location>
        <begin position="1"/>
        <end position="1229"/>
    </location>
</feature>
<feature type="transmembrane region" description="Helical" evidence="3">
    <location>
        <begin position="22"/>
        <end position="42"/>
    </location>
</feature>
<feature type="transmembrane region" description="Helical" evidence="3">
    <location>
        <begin position="69"/>
        <end position="89"/>
    </location>
</feature>
<feature type="transmembrane region" description="Helical" evidence="3">
    <location>
        <begin position="145"/>
        <end position="167"/>
    </location>
</feature>
<feature type="transmembrane region" description="Helical" evidence="3">
    <location>
        <begin position="171"/>
        <end position="193"/>
    </location>
</feature>
<feature type="transmembrane region" description="Helical" evidence="3">
    <location>
        <begin position="251"/>
        <end position="271"/>
    </location>
</feature>
<feature type="transmembrane region" description="Helical" evidence="3">
    <location>
        <begin position="274"/>
        <end position="294"/>
    </location>
</feature>
<feature type="transmembrane region" description="Helical" evidence="3">
    <location>
        <begin position="661"/>
        <end position="681"/>
    </location>
</feature>
<feature type="transmembrane region" description="Helical" evidence="3">
    <location>
        <begin position="703"/>
        <end position="723"/>
    </location>
</feature>
<feature type="transmembrane region" description="Helical" evidence="3">
    <location>
        <begin position="782"/>
        <end position="800"/>
    </location>
</feature>
<feature type="transmembrane region" description="Helical" evidence="3">
    <location>
        <begin position="807"/>
        <end position="823"/>
    </location>
</feature>
<feature type="transmembrane region" description="Helical" evidence="3">
    <location>
        <begin position="885"/>
        <end position="908"/>
    </location>
</feature>
<feature type="transmembrane region" description="Helical" evidence="3">
    <location>
        <begin position="923"/>
        <end position="943"/>
    </location>
</feature>
<feature type="domain" description="ABC transmembrane type-1 1" evidence="3">
    <location>
        <begin position="22"/>
        <end position="311"/>
    </location>
</feature>
<feature type="domain" description="ABC transporter 1" evidence="2">
    <location>
        <begin position="346"/>
        <end position="582"/>
    </location>
</feature>
<feature type="domain" description="ABC transmembrane type-1 2" evidence="3">
    <location>
        <begin position="661"/>
        <end position="949"/>
    </location>
</feature>
<feature type="domain" description="ABC transporter 2" evidence="2">
    <location>
        <begin position="984"/>
        <end position="1222"/>
    </location>
</feature>
<feature type="binding site" evidence="2">
    <location>
        <begin position="381"/>
        <end position="388"/>
    </location>
    <ligand>
        <name>ATP</name>
        <dbReference type="ChEBI" id="CHEBI:30616"/>
        <label>1</label>
    </ligand>
</feature>
<feature type="binding site" evidence="2">
    <location>
        <begin position="1019"/>
        <end position="1026"/>
    </location>
    <ligand>
        <name>ATP</name>
        <dbReference type="ChEBI" id="CHEBI:30616"/>
        <label>2</label>
    </ligand>
</feature>
<feature type="glycosylation site" description="N-linked (GlcNAc...) asparagine" evidence="1">
    <location>
        <position position="529"/>
    </location>
</feature>
<feature type="glycosylation site" description="N-linked (GlcNAc...) asparagine" evidence="1">
    <location>
        <position position="594"/>
    </location>
</feature>
<feature type="glycosylation site" description="N-linked (GlcNAc...) asparagine" evidence="1">
    <location>
        <position position="758"/>
    </location>
</feature>
<feature type="glycosylation site" description="N-linked (GlcNAc...) asparagine" evidence="1">
    <location>
        <position position="1004"/>
    </location>
</feature>
<feature type="glycosylation site" description="N-linked (GlcNAc...) asparagine" evidence="1">
    <location>
        <position position="1157"/>
    </location>
</feature>
<keyword id="KW-0067">ATP-binding</keyword>
<keyword id="KW-0325">Glycoprotein</keyword>
<keyword id="KW-0472">Membrane</keyword>
<keyword id="KW-0547">Nucleotide-binding</keyword>
<keyword id="KW-1185">Reference proteome</keyword>
<keyword id="KW-0677">Repeat</keyword>
<keyword id="KW-0812">Transmembrane</keyword>
<keyword id="KW-1133">Transmembrane helix</keyword>
<keyword id="KW-0813">Transport</keyword>
<accession>Q9LSJ2</accession>
<accession>F4IZ32</accession>
<name>AB22B_ARATH</name>
<proteinExistence type="inferred from homology"/>
<dbReference type="EMBL" id="AB026644">
    <property type="protein sequence ID" value="BAB02858.1"/>
    <property type="status" value="ALT_INIT"/>
    <property type="molecule type" value="Genomic_DNA"/>
</dbReference>
<dbReference type="EMBL" id="CP002686">
    <property type="protein sequence ID" value="AEE77442.1"/>
    <property type="status" value="ALT_SEQ"/>
    <property type="molecule type" value="Genomic_DNA"/>
</dbReference>
<dbReference type="EMBL" id="CP002686">
    <property type="protein sequence ID" value="ANM65564.1"/>
    <property type="molecule type" value="Genomic_DNA"/>
</dbReference>
<dbReference type="RefSeq" id="NP_001327523.1">
    <property type="nucleotide sequence ID" value="NM_001338956.1"/>
</dbReference>
<dbReference type="RefSeq" id="NP_683599.1">
    <property type="nucleotide sequence ID" value="NM_148757.1"/>
</dbReference>
<dbReference type="SMR" id="Q9LSJ2"/>
<dbReference type="FunCoup" id="Q9LSJ2">
    <property type="interactions" value="144"/>
</dbReference>
<dbReference type="STRING" id="3702.Q9LSJ2"/>
<dbReference type="GlyCosmos" id="Q9LSJ2">
    <property type="glycosylation" value="5 sites, No reported glycans"/>
</dbReference>
<dbReference type="GlyGen" id="Q9LSJ2">
    <property type="glycosylation" value="5 sites"/>
</dbReference>
<dbReference type="PaxDb" id="3702-AT3G28415.1"/>
<dbReference type="ProteomicsDB" id="244497"/>
<dbReference type="EnsemblPlants" id="AT3G28415.2">
    <property type="protein sequence ID" value="AT3G28415.2"/>
    <property type="gene ID" value="AT3G28415"/>
</dbReference>
<dbReference type="GeneID" id="822471"/>
<dbReference type="Gramene" id="AT3G28415.2">
    <property type="protein sequence ID" value="AT3G28415.2"/>
    <property type="gene ID" value="AT3G28415"/>
</dbReference>
<dbReference type="KEGG" id="ath:AT3G28415"/>
<dbReference type="Araport" id="AT3G28415"/>
<dbReference type="TAIR" id="AT3G28415">
    <property type="gene designation" value="ABCB22"/>
</dbReference>
<dbReference type="eggNOG" id="KOG0055">
    <property type="taxonomic scope" value="Eukaryota"/>
</dbReference>
<dbReference type="HOGENOM" id="CLU_000604_17_2_1"/>
<dbReference type="InParanoid" id="Q9LSJ2"/>
<dbReference type="OMA" id="WALNYWY"/>
<dbReference type="PRO" id="PR:Q9LSJ2"/>
<dbReference type="Proteomes" id="UP000006548">
    <property type="component" value="Chromosome 3"/>
</dbReference>
<dbReference type="ExpressionAtlas" id="Q9LSJ2">
    <property type="expression patterns" value="baseline"/>
</dbReference>
<dbReference type="GO" id="GO:0016020">
    <property type="term" value="C:membrane"/>
    <property type="evidence" value="ECO:0007669"/>
    <property type="project" value="UniProtKB-SubCell"/>
</dbReference>
<dbReference type="GO" id="GO:0140359">
    <property type="term" value="F:ABC-type transporter activity"/>
    <property type="evidence" value="ECO:0007669"/>
    <property type="project" value="InterPro"/>
</dbReference>
<dbReference type="GO" id="GO:0005524">
    <property type="term" value="F:ATP binding"/>
    <property type="evidence" value="ECO:0007669"/>
    <property type="project" value="UniProtKB-KW"/>
</dbReference>
<dbReference type="GO" id="GO:0016887">
    <property type="term" value="F:ATP hydrolysis activity"/>
    <property type="evidence" value="ECO:0007669"/>
    <property type="project" value="InterPro"/>
</dbReference>
<dbReference type="CDD" id="cd18577">
    <property type="entry name" value="ABC_6TM_Pgp_ABCB1_D1_like"/>
    <property type="match status" value="1"/>
</dbReference>
<dbReference type="CDD" id="cd18578">
    <property type="entry name" value="ABC_6TM_Pgp_ABCB1_D2_like"/>
    <property type="match status" value="1"/>
</dbReference>
<dbReference type="CDD" id="cd03249">
    <property type="entry name" value="ABC_MTABC3_MDL1_MDL2"/>
    <property type="match status" value="2"/>
</dbReference>
<dbReference type="FunFam" id="1.20.1560.10:FF:000029">
    <property type="entry name" value="ABC transporter B family member 1"/>
    <property type="match status" value="1"/>
</dbReference>
<dbReference type="FunFam" id="3.40.50.300:FF:000205">
    <property type="entry name" value="ABC transporter B family member 4"/>
    <property type="match status" value="2"/>
</dbReference>
<dbReference type="FunFam" id="1.20.1560.10:FF:000126">
    <property type="entry name" value="Putative ABC transporter B family member 8"/>
    <property type="match status" value="1"/>
</dbReference>
<dbReference type="Gene3D" id="1.20.1560.10">
    <property type="entry name" value="ABC transporter type 1, transmembrane domain"/>
    <property type="match status" value="1"/>
</dbReference>
<dbReference type="Gene3D" id="3.40.50.300">
    <property type="entry name" value="P-loop containing nucleotide triphosphate hydrolases"/>
    <property type="match status" value="2"/>
</dbReference>
<dbReference type="InterPro" id="IPR003593">
    <property type="entry name" value="AAA+_ATPase"/>
</dbReference>
<dbReference type="InterPro" id="IPR011527">
    <property type="entry name" value="ABC1_TM_dom"/>
</dbReference>
<dbReference type="InterPro" id="IPR036640">
    <property type="entry name" value="ABC1_TM_sf"/>
</dbReference>
<dbReference type="InterPro" id="IPR003439">
    <property type="entry name" value="ABC_transporter-like_ATP-bd"/>
</dbReference>
<dbReference type="InterPro" id="IPR017871">
    <property type="entry name" value="ABC_transporter-like_CS"/>
</dbReference>
<dbReference type="InterPro" id="IPR027417">
    <property type="entry name" value="P-loop_NTPase"/>
</dbReference>
<dbReference type="PANTHER" id="PTHR45136">
    <property type="entry name" value="ABC TRANSPORTER DOMAIN-CONTAINING PROTEIN"/>
    <property type="match status" value="1"/>
</dbReference>
<dbReference type="PANTHER" id="PTHR45136:SF2">
    <property type="entry name" value="ABC TRANSPORTER DOMAIN-CONTAINING PROTEIN"/>
    <property type="match status" value="1"/>
</dbReference>
<dbReference type="Pfam" id="PF00664">
    <property type="entry name" value="ABC_membrane"/>
    <property type="match status" value="2"/>
</dbReference>
<dbReference type="Pfam" id="PF00005">
    <property type="entry name" value="ABC_tran"/>
    <property type="match status" value="2"/>
</dbReference>
<dbReference type="SMART" id="SM00382">
    <property type="entry name" value="AAA"/>
    <property type="match status" value="2"/>
</dbReference>
<dbReference type="SUPFAM" id="SSF90123">
    <property type="entry name" value="ABC transporter transmembrane region"/>
    <property type="match status" value="2"/>
</dbReference>
<dbReference type="SUPFAM" id="SSF52540">
    <property type="entry name" value="P-loop containing nucleoside triphosphate hydrolases"/>
    <property type="match status" value="2"/>
</dbReference>
<dbReference type="PROSITE" id="PS50929">
    <property type="entry name" value="ABC_TM1F"/>
    <property type="match status" value="2"/>
</dbReference>
<dbReference type="PROSITE" id="PS00211">
    <property type="entry name" value="ABC_TRANSPORTER_1"/>
    <property type="match status" value="2"/>
</dbReference>
<dbReference type="PROSITE" id="PS50893">
    <property type="entry name" value="ABC_TRANSPORTER_2"/>
    <property type="match status" value="2"/>
</dbReference>
<sequence length="1229" mass="134940">MKSFGSVRSIFMHANSVDLVLMGLGLIGAVGDGFITPIIFFITGLLLNDIGDSSFGDKTFMHAIMKNAVALLYVAGASLVICFVEGYCWTRTGERQASRMREKYLRAVLRQDVGYFDLHVTSTSDVITSVSSDTLVIQDVLSEKLPNFLMSASAFVASYIVGFIMLWRLTIVGFPFFILLLIPGLMCGRALINISRKIREEYNEAGSIAEQAISLVRTVYAFGSERKMISKFSAALEGSVKLGLRQGIAKGIAIGSNGVTYAIWGFMTWYGSRMVMYHGAKGGTIFAVIICITYGGTSLGRGLSNLKYFSEAVVAGERIIEVIKRVPDIDSDNPRGQVLENIKGEVQFKHVKFMYSSRPETPIFDDLCLRIPSGKSVALVGGSGSGKSTVISLLQRFYDPIVGEILIDGVSIKKLQVKWLRSQMGLVSQEPALFATSIEENILFGKEDASFDEVVEAAKSSNAHDFISQFPLGYKTQVGERGVQMSGGQKQRISIARAIIKSPTLLLLDEATSALDSESERVVQEALDNATIGRTTIVIAHRLSTIRNVDVICVFKNGQIVETGSHEELMENVDGQYTSLVRLQIMENEESNDNVSVSMREGQFSNFNKDVKYSSRLSIQSRSSLFATSSIDTNLAGSIPKDKKPSFKRLMAMNKPEWKHALYGCLSAVLYGALHPIYAYASGSMVSVYFLTSHDEMKEKTRIYVLLFVGLAVLCFLISIIQQYSFAYMGEYLTKRIRENILSKLLTFEVSWFDEDENSSGSICSRLAKDANVVRSLVGERVSLLVQTISAVSVACTLGLAISWKLSIVMIAIQPVVVGCFYTQRIVLKSISKKAIKAQDESSKLAAEAVSNIRTITAFSSQERILKLLKMVQEGPQRENIRQSWLAGIVLATSRSLMTCTSALNYWYGARLIIDGKITSKAFFELFILFVSTGRVIADAGAMTMDLAKGSDAVGSVFAVLDRYTNIEPEKPDGFVPQNIKGQIKFVNVDFAYPTRPDVIIFKNFSIDIDEGKSTAIVGPSGSGKSTIIGLIERFYDPLKGIVKIDGRDIRSYHLRSLRQHIGLVSQEPILFAGTIRENIMYGGASDKIDESEIIEAAKAANAHDFIVTLSDGYDTYCGDRGVQLSGGQKQRIAIARAVLKNPSVLLLDEATSALDNQSERMVQDALGRLMVGRTSVVIAHRLSTIQNCDTITVLDKGKVVECGTHSSLLAKGPTGVYFSLVSLQRTRY</sequence>
<evidence type="ECO:0000255" key="1"/>
<evidence type="ECO:0000255" key="2">
    <source>
        <dbReference type="PROSITE-ProRule" id="PRU00434"/>
    </source>
</evidence>
<evidence type="ECO:0000255" key="3">
    <source>
        <dbReference type="PROSITE-ProRule" id="PRU00441"/>
    </source>
</evidence>
<evidence type="ECO:0000305" key="4"/>